<dbReference type="EMBL" id="CP000539">
    <property type="protein sequence ID" value="ABM42891.1"/>
    <property type="molecule type" value="Genomic_DNA"/>
</dbReference>
<dbReference type="SMR" id="A1W9G6"/>
<dbReference type="STRING" id="232721.Ajs_2750"/>
<dbReference type="KEGG" id="ajs:Ajs_2750"/>
<dbReference type="eggNOG" id="COG1666">
    <property type="taxonomic scope" value="Bacteria"/>
</dbReference>
<dbReference type="HOGENOM" id="CLU_099839_1_0_4"/>
<dbReference type="Proteomes" id="UP000000645">
    <property type="component" value="Chromosome"/>
</dbReference>
<dbReference type="GO" id="GO:0005829">
    <property type="term" value="C:cytosol"/>
    <property type="evidence" value="ECO:0007669"/>
    <property type="project" value="TreeGrafter"/>
</dbReference>
<dbReference type="GO" id="GO:0000166">
    <property type="term" value="F:nucleotide binding"/>
    <property type="evidence" value="ECO:0007669"/>
    <property type="project" value="TreeGrafter"/>
</dbReference>
<dbReference type="CDD" id="cd11740">
    <property type="entry name" value="YajQ_like"/>
    <property type="match status" value="1"/>
</dbReference>
<dbReference type="Gene3D" id="3.30.70.860">
    <property type="match status" value="1"/>
</dbReference>
<dbReference type="Gene3D" id="3.30.70.990">
    <property type="entry name" value="YajQ-like, domain 2"/>
    <property type="match status" value="1"/>
</dbReference>
<dbReference type="HAMAP" id="MF_00632">
    <property type="entry name" value="YajQ"/>
    <property type="match status" value="1"/>
</dbReference>
<dbReference type="InterPro" id="IPR007551">
    <property type="entry name" value="DUF520"/>
</dbReference>
<dbReference type="InterPro" id="IPR035571">
    <property type="entry name" value="UPF0234-like_C"/>
</dbReference>
<dbReference type="InterPro" id="IPR035570">
    <property type="entry name" value="UPF0234_N"/>
</dbReference>
<dbReference type="InterPro" id="IPR036183">
    <property type="entry name" value="YajQ-like_sf"/>
</dbReference>
<dbReference type="NCBIfam" id="NF003819">
    <property type="entry name" value="PRK05412.1"/>
    <property type="match status" value="1"/>
</dbReference>
<dbReference type="PANTHER" id="PTHR30476">
    <property type="entry name" value="UPF0234 PROTEIN YAJQ"/>
    <property type="match status" value="1"/>
</dbReference>
<dbReference type="PANTHER" id="PTHR30476:SF0">
    <property type="entry name" value="UPF0234 PROTEIN YAJQ"/>
    <property type="match status" value="1"/>
</dbReference>
<dbReference type="Pfam" id="PF04461">
    <property type="entry name" value="DUF520"/>
    <property type="match status" value="1"/>
</dbReference>
<dbReference type="SUPFAM" id="SSF89963">
    <property type="entry name" value="YajQ-like"/>
    <property type="match status" value="2"/>
</dbReference>
<gene>
    <name type="ordered locus">Ajs_2750</name>
</gene>
<reference key="1">
    <citation type="submission" date="2006-12" db="EMBL/GenBank/DDBJ databases">
        <title>Complete sequence of chromosome 1 of Acidovorax sp. JS42.</title>
        <authorList>
            <person name="Copeland A."/>
            <person name="Lucas S."/>
            <person name="Lapidus A."/>
            <person name="Barry K."/>
            <person name="Detter J.C."/>
            <person name="Glavina del Rio T."/>
            <person name="Dalin E."/>
            <person name="Tice H."/>
            <person name="Pitluck S."/>
            <person name="Chertkov O."/>
            <person name="Brettin T."/>
            <person name="Bruce D."/>
            <person name="Han C."/>
            <person name="Tapia R."/>
            <person name="Gilna P."/>
            <person name="Schmutz J."/>
            <person name="Larimer F."/>
            <person name="Land M."/>
            <person name="Hauser L."/>
            <person name="Kyrpides N."/>
            <person name="Kim E."/>
            <person name="Stahl D."/>
            <person name="Richardson P."/>
        </authorList>
    </citation>
    <scope>NUCLEOTIDE SEQUENCE [LARGE SCALE GENOMIC DNA]</scope>
    <source>
        <strain>JS42</strain>
    </source>
</reference>
<feature type="chain" id="PRO_1000051710" description="Nucleotide-binding protein Ajs_2750">
    <location>
        <begin position="1"/>
        <end position="161"/>
    </location>
</feature>
<accession>A1W9G6</accession>
<comment type="function">
    <text evidence="1">Nucleotide-binding protein.</text>
</comment>
<comment type="similarity">
    <text evidence="1">Belongs to the YajQ family.</text>
</comment>
<name>Y2750_ACISJ</name>
<evidence type="ECO:0000255" key="1">
    <source>
        <dbReference type="HAMAP-Rule" id="MF_00632"/>
    </source>
</evidence>
<protein>
    <recommendedName>
        <fullName evidence="1">Nucleotide-binding protein Ajs_2750</fullName>
    </recommendedName>
</protein>
<sequence length="161" mass="18182">MPSFDTVCEANFVEVKNAVENTAKEIGTRFDFKGTSAAVELKDKEITLYGDADFQLQQVEDILRNKLTKRNVDVRFLDAQKPQKIGGDKLKQVVKVKNGIDSEQAKKIQRLIKDSKLKLQAAIQEDKVRVTGAKRDDLQAAMALIRKDIADLPLTFDNFRD</sequence>
<keyword id="KW-0547">Nucleotide-binding</keyword>
<proteinExistence type="inferred from homology"/>
<organism>
    <name type="scientific">Acidovorax sp. (strain JS42)</name>
    <dbReference type="NCBI Taxonomy" id="232721"/>
    <lineage>
        <taxon>Bacteria</taxon>
        <taxon>Pseudomonadati</taxon>
        <taxon>Pseudomonadota</taxon>
        <taxon>Betaproteobacteria</taxon>
        <taxon>Burkholderiales</taxon>
        <taxon>Comamonadaceae</taxon>
        <taxon>Acidovorax</taxon>
    </lineage>
</organism>